<reference key="1">
    <citation type="journal article" date="2002" name="Proc. Natl. Acad. Sci. U.S.A.">
        <title>Genome sequence of the hyperthermophilic crenarchaeon Pyrobaculum aerophilum.</title>
        <authorList>
            <person name="Fitz-Gibbon S.T."/>
            <person name="Ladner H."/>
            <person name="Kim U.-J."/>
            <person name="Stetter K.O."/>
            <person name="Simon M.I."/>
            <person name="Miller J.H."/>
        </authorList>
    </citation>
    <scope>NUCLEOTIDE SEQUENCE [LARGE SCALE GENOMIC DNA]</scope>
    <source>
        <strain>ATCC 51768 / DSM 7523 / JCM 9630 / CIP 104966 / NBRC 100827 / IM2</strain>
    </source>
</reference>
<comment type="function">
    <text evidence="1">Catalyzes the conversion of 3-deoxy-D-arabino-heptulosonate 7-phosphate (DAHP) to dehydroquinate (DHQ).</text>
</comment>
<comment type="catalytic activity">
    <reaction evidence="1">
        <text>7-phospho-2-dehydro-3-deoxy-D-arabino-heptonate = 3-dehydroquinate + phosphate</text>
        <dbReference type="Rhea" id="RHEA:21968"/>
        <dbReference type="ChEBI" id="CHEBI:32364"/>
        <dbReference type="ChEBI" id="CHEBI:43474"/>
        <dbReference type="ChEBI" id="CHEBI:58394"/>
        <dbReference type="EC" id="4.2.3.4"/>
    </reaction>
</comment>
<comment type="cofactor">
    <cofactor evidence="1">
        <name>NAD(+)</name>
        <dbReference type="ChEBI" id="CHEBI:57540"/>
    </cofactor>
</comment>
<comment type="cofactor">
    <cofactor evidence="1">
        <name>Co(2+)</name>
        <dbReference type="ChEBI" id="CHEBI:48828"/>
    </cofactor>
    <cofactor evidence="1">
        <name>Zn(2+)</name>
        <dbReference type="ChEBI" id="CHEBI:29105"/>
    </cofactor>
    <text evidence="1">Binds 1 divalent metal cation per subunit. Can use either Co(2+) or Zn(2+).</text>
</comment>
<comment type="pathway">
    <text evidence="1">Metabolic intermediate biosynthesis; chorismate biosynthesis; chorismate from D-erythrose 4-phosphate and phosphoenolpyruvate: step 2/7.</text>
</comment>
<comment type="subcellular location">
    <subcellularLocation>
        <location evidence="1">Cytoplasm</location>
    </subcellularLocation>
</comment>
<comment type="similarity">
    <text evidence="1">Belongs to the sugar phosphate cyclases superfamily. Dehydroquinate synthase family.</text>
</comment>
<feature type="chain" id="PRO_0000140818" description="3-dehydroquinate synthase">
    <location>
        <begin position="1"/>
        <end position="345"/>
    </location>
</feature>
<feature type="binding site" evidence="1">
    <location>
        <begin position="86"/>
        <end position="90"/>
    </location>
    <ligand>
        <name>NAD(+)</name>
        <dbReference type="ChEBI" id="CHEBI:57540"/>
    </ligand>
</feature>
<feature type="binding site" evidence="1">
    <location>
        <begin position="110"/>
        <end position="111"/>
    </location>
    <ligand>
        <name>NAD(+)</name>
        <dbReference type="ChEBI" id="CHEBI:57540"/>
    </ligand>
</feature>
<feature type="binding site" evidence="1">
    <location>
        <position position="123"/>
    </location>
    <ligand>
        <name>NAD(+)</name>
        <dbReference type="ChEBI" id="CHEBI:57540"/>
    </ligand>
</feature>
<feature type="binding site" evidence="1">
    <location>
        <position position="132"/>
    </location>
    <ligand>
        <name>NAD(+)</name>
        <dbReference type="ChEBI" id="CHEBI:57540"/>
    </ligand>
</feature>
<feature type="binding site" evidence="1">
    <location>
        <position position="165"/>
    </location>
    <ligand>
        <name>Zn(2+)</name>
        <dbReference type="ChEBI" id="CHEBI:29105"/>
    </ligand>
</feature>
<feature type="binding site" evidence="1">
    <location>
        <position position="229"/>
    </location>
    <ligand>
        <name>Zn(2+)</name>
        <dbReference type="ChEBI" id="CHEBI:29105"/>
    </ligand>
</feature>
<feature type="binding site" evidence="1">
    <location>
        <position position="243"/>
    </location>
    <ligand>
        <name>Zn(2+)</name>
        <dbReference type="ChEBI" id="CHEBI:29105"/>
    </ligand>
</feature>
<keyword id="KW-0028">Amino-acid biosynthesis</keyword>
<keyword id="KW-0057">Aromatic amino acid biosynthesis</keyword>
<keyword id="KW-0170">Cobalt</keyword>
<keyword id="KW-0963">Cytoplasm</keyword>
<keyword id="KW-0456">Lyase</keyword>
<keyword id="KW-0479">Metal-binding</keyword>
<keyword id="KW-0520">NAD</keyword>
<keyword id="KW-0547">Nucleotide-binding</keyword>
<keyword id="KW-1185">Reference proteome</keyword>
<keyword id="KW-0862">Zinc</keyword>
<name>AROB_PYRAE</name>
<protein>
    <recommendedName>
        <fullName evidence="1">3-dehydroquinate synthase</fullName>
        <shortName evidence="1">DHQS</shortName>
        <ecNumber evidence="1">4.2.3.4</ecNumber>
    </recommendedName>
</protein>
<sequence>MRRFFYTHSRGVTEVVVGRGIPYDKYVERPVVLIEEGLENPLPNAPALALKGGEGVKSLEALSKVYVFLQEAEADRGSTLVAVGGGALLDLATFAAGTYMRGIGLVQVPTTLLAMVDAALGGKGAVDWGLVKNLVGVFYQPKAILCDLEWLRSLPPRVYRSAFAEVVKYGLALDEEFYSWLRQSTTALLNRGEDALEEAVYRSLKLKASVVEADEFEERGIRQVLNVGHTVGHALERVLGLLHGEAVSLGIAAELRLSAELGYLREKYVEETKSLLKAFELPTEAGLSSEQLAAAKGLIKYDKKRRRDYVYLPLVIRPGKWILERLRVEEVARAVEYVVPQGRTA</sequence>
<organism>
    <name type="scientific">Pyrobaculum aerophilum (strain ATCC 51768 / DSM 7523 / JCM 9630 / CIP 104966 / NBRC 100827 / IM2)</name>
    <dbReference type="NCBI Taxonomy" id="178306"/>
    <lineage>
        <taxon>Archaea</taxon>
        <taxon>Thermoproteota</taxon>
        <taxon>Thermoprotei</taxon>
        <taxon>Thermoproteales</taxon>
        <taxon>Thermoproteaceae</taxon>
        <taxon>Pyrobaculum</taxon>
    </lineage>
</organism>
<gene>
    <name evidence="1" type="primary">aroB</name>
    <name type="ordered locus">PAE1926</name>
</gene>
<evidence type="ECO:0000255" key="1">
    <source>
        <dbReference type="HAMAP-Rule" id="MF_00110"/>
    </source>
</evidence>
<dbReference type="EC" id="4.2.3.4" evidence="1"/>
<dbReference type="EMBL" id="AE009441">
    <property type="protein sequence ID" value="AAL63822.1"/>
    <property type="molecule type" value="Genomic_DNA"/>
</dbReference>
<dbReference type="RefSeq" id="WP_011008293.1">
    <property type="nucleotide sequence ID" value="NC_003364.1"/>
</dbReference>
<dbReference type="SMR" id="Q8ZW80"/>
<dbReference type="FunCoup" id="Q8ZW80">
    <property type="interactions" value="172"/>
</dbReference>
<dbReference type="STRING" id="178306.PAE1926"/>
<dbReference type="EnsemblBacteria" id="AAL63822">
    <property type="protein sequence ID" value="AAL63822"/>
    <property type="gene ID" value="PAE1926"/>
</dbReference>
<dbReference type="GeneID" id="1464145"/>
<dbReference type="KEGG" id="pai:PAE1926"/>
<dbReference type="PATRIC" id="fig|178306.9.peg.1426"/>
<dbReference type="eggNOG" id="arCOG00983">
    <property type="taxonomic scope" value="Archaea"/>
</dbReference>
<dbReference type="HOGENOM" id="CLU_001201_0_1_2"/>
<dbReference type="InParanoid" id="Q8ZW80"/>
<dbReference type="UniPathway" id="UPA00053">
    <property type="reaction ID" value="UER00085"/>
</dbReference>
<dbReference type="Proteomes" id="UP000002439">
    <property type="component" value="Chromosome"/>
</dbReference>
<dbReference type="GO" id="GO:0005737">
    <property type="term" value="C:cytoplasm"/>
    <property type="evidence" value="ECO:0007669"/>
    <property type="project" value="UniProtKB-SubCell"/>
</dbReference>
<dbReference type="GO" id="GO:0003856">
    <property type="term" value="F:3-dehydroquinate synthase activity"/>
    <property type="evidence" value="ECO:0000318"/>
    <property type="project" value="GO_Central"/>
</dbReference>
<dbReference type="GO" id="GO:0046872">
    <property type="term" value="F:metal ion binding"/>
    <property type="evidence" value="ECO:0007669"/>
    <property type="project" value="UniProtKB-KW"/>
</dbReference>
<dbReference type="GO" id="GO:0000166">
    <property type="term" value="F:nucleotide binding"/>
    <property type="evidence" value="ECO:0007669"/>
    <property type="project" value="UniProtKB-KW"/>
</dbReference>
<dbReference type="GO" id="GO:0008652">
    <property type="term" value="P:amino acid biosynthetic process"/>
    <property type="evidence" value="ECO:0007669"/>
    <property type="project" value="UniProtKB-KW"/>
</dbReference>
<dbReference type="GO" id="GO:0009073">
    <property type="term" value="P:aromatic amino acid family biosynthetic process"/>
    <property type="evidence" value="ECO:0007669"/>
    <property type="project" value="UniProtKB-KW"/>
</dbReference>
<dbReference type="GO" id="GO:0009423">
    <property type="term" value="P:chorismate biosynthetic process"/>
    <property type="evidence" value="ECO:0007669"/>
    <property type="project" value="UniProtKB-UniRule"/>
</dbReference>
<dbReference type="CDD" id="cd08195">
    <property type="entry name" value="DHQS"/>
    <property type="match status" value="1"/>
</dbReference>
<dbReference type="Gene3D" id="3.40.50.1970">
    <property type="match status" value="1"/>
</dbReference>
<dbReference type="Gene3D" id="1.20.1090.10">
    <property type="entry name" value="Dehydroquinate synthase-like - alpha domain"/>
    <property type="match status" value="1"/>
</dbReference>
<dbReference type="HAMAP" id="MF_00110">
    <property type="entry name" value="DHQ_synthase"/>
    <property type="match status" value="1"/>
</dbReference>
<dbReference type="InterPro" id="IPR050071">
    <property type="entry name" value="Dehydroquinate_synthase"/>
</dbReference>
<dbReference type="InterPro" id="IPR016037">
    <property type="entry name" value="DHQ_synth_AroB"/>
</dbReference>
<dbReference type="InterPro" id="IPR030963">
    <property type="entry name" value="DHQ_synth_fam"/>
</dbReference>
<dbReference type="InterPro" id="IPR030960">
    <property type="entry name" value="DHQS/DOIS_N"/>
</dbReference>
<dbReference type="InterPro" id="IPR056179">
    <property type="entry name" value="DHQS_C"/>
</dbReference>
<dbReference type="PANTHER" id="PTHR43622">
    <property type="entry name" value="3-DEHYDROQUINATE SYNTHASE"/>
    <property type="match status" value="1"/>
</dbReference>
<dbReference type="PANTHER" id="PTHR43622:SF1">
    <property type="entry name" value="3-DEHYDROQUINATE SYNTHASE"/>
    <property type="match status" value="1"/>
</dbReference>
<dbReference type="Pfam" id="PF01761">
    <property type="entry name" value="DHQ_synthase"/>
    <property type="match status" value="1"/>
</dbReference>
<dbReference type="Pfam" id="PF24621">
    <property type="entry name" value="DHQS_C"/>
    <property type="match status" value="1"/>
</dbReference>
<dbReference type="PIRSF" id="PIRSF001455">
    <property type="entry name" value="DHQ_synth"/>
    <property type="match status" value="1"/>
</dbReference>
<dbReference type="SUPFAM" id="SSF56796">
    <property type="entry name" value="Dehydroquinate synthase-like"/>
    <property type="match status" value="1"/>
</dbReference>
<proteinExistence type="inferred from homology"/>
<accession>Q8ZW80</accession>